<feature type="chain" id="PRO_0000321445" description="Argininosuccinate lyase">
    <location>
        <begin position="1"/>
        <end position="466"/>
    </location>
</feature>
<keyword id="KW-0028">Amino-acid biosynthesis</keyword>
<keyword id="KW-0055">Arginine biosynthesis</keyword>
<keyword id="KW-0963">Cytoplasm</keyword>
<keyword id="KW-0456">Lyase</keyword>
<keyword id="KW-1185">Reference proteome</keyword>
<gene>
    <name evidence="1" type="primary">argH</name>
    <name type="ordered locus">Oant_0999</name>
</gene>
<organism>
    <name type="scientific">Brucella anthropi (strain ATCC 49188 / DSM 6882 / CCUG 24695 / JCM 21032 / LMG 3331 / NBRC 15819 / NCTC 12168 / Alc 37)</name>
    <name type="common">Ochrobactrum anthropi</name>
    <dbReference type="NCBI Taxonomy" id="439375"/>
    <lineage>
        <taxon>Bacteria</taxon>
        <taxon>Pseudomonadati</taxon>
        <taxon>Pseudomonadota</taxon>
        <taxon>Alphaproteobacteria</taxon>
        <taxon>Hyphomicrobiales</taxon>
        <taxon>Brucellaceae</taxon>
        <taxon>Brucella/Ochrobactrum group</taxon>
        <taxon>Brucella</taxon>
    </lineage>
</organism>
<evidence type="ECO:0000255" key="1">
    <source>
        <dbReference type="HAMAP-Rule" id="MF_00006"/>
    </source>
</evidence>
<protein>
    <recommendedName>
        <fullName evidence="1">Argininosuccinate lyase</fullName>
        <shortName evidence="1">ASAL</shortName>
        <ecNumber evidence="1">4.3.2.1</ecNumber>
    </recommendedName>
    <alternativeName>
        <fullName evidence="1">Arginosuccinase</fullName>
    </alternativeName>
</protein>
<reference key="1">
    <citation type="journal article" date="2011" name="J. Bacteriol.">
        <title>Genome of Ochrobactrum anthropi ATCC 49188 T, a versatile opportunistic pathogen and symbiont of several eukaryotic hosts.</title>
        <authorList>
            <person name="Chain P.S."/>
            <person name="Lang D.M."/>
            <person name="Comerci D.J."/>
            <person name="Malfatti S.A."/>
            <person name="Vergez L.M."/>
            <person name="Shin M."/>
            <person name="Ugalde R.A."/>
            <person name="Garcia E."/>
            <person name="Tolmasky M.E."/>
        </authorList>
    </citation>
    <scope>NUCLEOTIDE SEQUENCE [LARGE SCALE GENOMIC DNA]</scope>
    <source>
        <strain>ATCC 49188 / DSM 6882 / CCUG 24695 / JCM 21032 / LMG 3331 / NBRC 15819 / NCTC 12168 / Alc 37</strain>
    </source>
</reference>
<accession>A6WXL6</accession>
<proteinExistence type="inferred from homology"/>
<name>ARLY_BRUA4</name>
<sequence>MSEQKSSNQMWGGRFASGPDAIMEEINASIGFDRKLYAQDIQGSLAHAAMLAKTGIIAAEDHRQIEDGLKTILKEIEDGKFTFSRKLEDIHMNIEARLADLIGPSAGRLHTARSRNDQVAVDFRLWVKQELEKTAAALKNLIEAFLERAEEHAATVMPGFTHLQTAQPVTFGHHCMAYVEMFGRDLSRVRDAIERMDESPLGAAALAGTGFPIDRHMTAKALGFREPTRNSLDSVSDRDYALEFLSLAAICAGHLSRLAEEIVIWSTPQFNFVRLSDAFSTGSSIMPQKKNPDAAELVRAKTGRINGSLVALLTIMKGLPLAYSKDMQEDKEQVFDAAENLELAIAAMAGMVRDLTINVASMKKAAGSGYSTATDLADWLVRELGLPFREAHHVTGRAVALAESRKVDLAKLSLEELQSIHPGITDAIFGYLTVEKSVKSRQSFGGTAPQEVRRQIRYWKKRITKA</sequence>
<comment type="catalytic activity">
    <reaction evidence="1">
        <text>2-(N(omega)-L-arginino)succinate = fumarate + L-arginine</text>
        <dbReference type="Rhea" id="RHEA:24020"/>
        <dbReference type="ChEBI" id="CHEBI:29806"/>
        <dbReference type="ChEBI" id="CHEBI:32682"/>
        <dbReference type="ChEBI" id="CHEBI:57472"/>
        <dbReference type="EC" id="4.3.2.1"/>
    </reaction>
</comment>
<comment type="pathway">
    <text evidence="1">Amino-acid biosynthesis; L-arginine biosynthesis; L-arginine from L-ornithine and carbamoyl phosphate: step 3/3.</text>
</comment>
<comment type="subcellular location">
    <subcellularLocation>
        <location evidence="1">Cytoplasm</location>
    </subcellularLocation>
</comment>
<comment type="similarity">
    <text evidence="1">Belongs to the lyase 1 family. Argininosuccinate lyase subfamily.</text>
</comment>
<dbReference type="EC" id="4.3.2.1" evidence="1"/>
<dbReference type="EMBL" id="CP000758">
    <property type="protein sequence ID" value="ABS13720.1"/>
    <property type="molecule type" value="Genomic_DNA"/>
</dbReference>
<dbReference type="RefSeq" id="WP_012091178.1">
    <property type="nucleotide sequence ID" value="NC_009667.1"/>
</dbReference>
<dbReference type="SMR" id="A6WXL6"/>
<dbReference type="STRING" id="439375.Oant_0999"/>
<dbReference type="KEGG" id="oan:Oant_0999"/>
<dbReference type="PATRIC" id="fig|439375.7.peg.1047"/>
<dbReference type="eggNOG" id="COG0165">
    <property type="taxonomic scope" value="Bacteria"/>
</dbReference>
<dbReference type="HOGENOM" id="CLU_027272_2_3_5"/>
<dbReference type="PhylomeDB" id="A6WXL6"/>
<dbReference type="UniPathway" id="UPA00068">
    <property type="reaction ID" value="UER00114"/>
</dbReference>
<dbReference type="Proteomes" id="UP000002301">
    <property type="component" value="Chromosome 1"/>
</dbReference>
<dbReference type="GO" id="GO:0005829">
    <property type="term" value="C:cytosol"/>
    <property type="evidence" value="ECO:0007669"/>
    <property type="project" value="TreeGrafter"/>
</dbReference>
<dbReference type="GO" id="GO:0004056">
    <property type="term" value="F:argininosuccinate lyase activity"/>
    <property type="evidence" value="ECO:0007669"/>
    <property type="project" value="UniProtKB-UniRule"/>
</dbReference>
<dbReference type="GO" id="GO:0042450">
    <property type="term" value="P:arginine biosynthetic process via ornithine"/>
    <property type="evidence" value="ECO:0007669"/>
    <property type="project" value="InterPro"/>
</dbReference>
<dbReference type="GO" id="GO:0006526">
    <property type="term" value="P:L-arginine biosynthetic process"/>
    <property type="evidence" value="ECO:0007669"/>
    <property type="project" value="UniProtKB-UniRule"/>
</dbReference>
<dbReference type="CDD" id="cd01359">
    <property type="entry name" value="Argininosuccinate_lyase"/>
    <property type="match status" value="1"/>
</dbReference>
<dbReference type="FunFam" id="1.10.275.10:FF:000002">
    <property type="entry name" value="Argininosuccinate lyase"/>
    <property type="match status" value="1"/>
</dbReference>
<dbReference type="FunFam" id="1.10.40.30:FF:000001">
    <property type="entry name" value="Argininosuccinate lyase"/>
    <property type="match status" value="1"/>
</dbReference>
<dbReference type="FunFam" id="1.20.200.10:FF:000015">
    <property type="entry name" value="argininosuccinate lyase isoform X2"/>
    <property type="match status" value="1"/>
</dbReference>
<dbReference type="Gene3D" id="1.10.40.30">
    <property type="entry name" value="Fumarase/aspartase (C-terminal domain)"/>
    <property type="match status" value="1"/>
</dbReference>
<dbReference type="Gene3D" id="1.20.200.10">
    <property type="entry name" value="Fumarase/aspartase (Central domain)"/>
    <property type="match status" value="1"/>
</dbReference>
<dbReference type="Gene3D" id="1.10.275.10">
    <property type="entry name" value="Fumarase/aspartase (N-terminal domain)"/>
    <property type="match status" value="1"/>
</dbReference>
<dbReference type="HAMAP" id="MF_00006">
    <property type="entry name" value="Arg_succ_lyase"/>
    <property type="match status" value="1"/>
</dbReference>
<dbReference type="InterPro" id="IPR029419">
    <property type="entry name" value="Arg_succ_lyase_C"/>
</dbReference>
<dbReference type="InterPro" id="IPR009049">
    <property type="entry name" value="Argininosuccinate_lyase"/>
</dbReference>
<dbReference type="InterPro" id="IPR024083">
    <property type="entry name" value="Fumarase/histidase_N"/>
</dbReference>
<dbReference type="InterPro" id="IPR020557">
    <property type="entry name" value="Fumarate_lyase_CS"/>
</dbReference>
<dbReference type="InterPro" id="IPR000362">
    <property type="entry name" value="Fumarate_lyase_fam"/>
</dbReference>
<dbReference type="InterPro" id="IPR022761">
    <property type="entry name" value="Fumarate_lyase_N"/>
</dbReference>
<dbReference type="InterPro" id="IPR008948">
    <property type="entry name" value="L-Aspartase-like"/>
</dbReference>
<dbReference type="NCBIfam" id="TIGR00838">
    <property type="entry name" value="argH"/>
    <property type="match status" value="1"/>
</dbReference>
<dbReference type="PANTHER" id="PTHR43814">
    <property type="entry name" value="ARGININOSUCCINATE LYASE"/>
    <property type="match status" value="1"/>
</dbReference>
<dbReference type="PANTHER" id="PTHR43814:SF1">
    <property type="entry name" value="ARGININOSUCCINATE LYASE"/>
    <property type="match status" value="1"/>
</dbReference>
<dbReference type="Pfam" id="PF14698">
    <property type="entry name" value="ASL_C2"/>
    <property type="match status" value="1"/>
</dbReference>
<dbReference type="Pfam" id="PF00206">
    <property type="entry name" value="Lyase_1"/>
    <property type="match status" value="1"/>
</dbReference>
<dbReference type="PRINTS" id="PR00145">
    <property type="entry name" value="ARGSUCLYASE"/>
</dbReference>
<dbReference type="PRINTS" id="PR00149">
    <property type="entry name" value="FUMRATELYASE"/>
</dbReference>
<dbReference type="SUPFAM" id="SSF48557">
    <property type="entry name" value="L-aspartase-like"/>
    <property type="match status" value="1"/>
</dbReference>
<dbReference type="PROSITE" id="PS00163">
    <property type="entry name" value="FUMARATE_LYASES"/>
    <property type="match status" value="1"/>
</dbReference>